<feature type="chain" id="PRO_0000237764" description="2-C-methyl-D-erythritol 2,4-cyclodiphosphate synthase">
    <location>
        <begin position="1"/>
        <end position="163"/>
    </location>
</feature>
<feature type="binding site" evidence="1">
    <location>
        <begin position="12"/>
        <end position="14"/>
    </location>
    <ligand>
        <name>4-CDP-2-C-methyl-D-erythritol 2-phosphate</name>
        <dbReference type="ChEBI" id="CHEBI:57919"/>
    </ligand>
</feature>
<feature type="binding site" evidence="1">
    <location>
        <position position="12"/>
    </location>
    <ligand>
        <name>a divalent metal cation</name>
        <dbReference type="ChEBI" id="CHEBI:60240"/>
    </ligand>
</feature>
<feature type="binding site" evidence="1">
    <location>
        <position position="14"/>
    </location>
    <ligand>
        <name>a divalent metal cation</name>
        <dbReference type="ChEBI" id="CHEBI:60240"/>
    </ligand>
</feature>
<feature type="binding site" evidence="1">
    <location>
        <begin position="38"/>
        <end position="39"/>
    </location>
    <ligand>
        <name>4-CDP-2-C-methyl-D-erythritol 2-phosphate</name>
        <dbReference type="ChEBI" id="CHEBI:57919"/>
    </ligand>
</feature>
<feature type="binding site" evidence="1">
    <location>
        <position position="46"/>
    </location>
    <ligand>
        <name>a divalent metal cation</name>
        <dbReference type="ChEBI" id="CHEBI:60240"/>
    </ligand>
</feature>
<feature type="binding site" evidence="1">
    <location>
        <begin position="60"/>
        <end position="62"/>
    </location>
    <ligand>
        <name>4-CDP-2-C-methyl-D-erythritol 2-phosphate</name>
        <dbReference type="ChEBI" id="CHEBI:57919"/>
    </ligand>
</feature>
<feature type="binding site" evidence="1">
    <location>
        <begin position="136"/>
        <end position="139"/>
    </location>
    <ligand>
        <name>4-CDP-2-C-methyl-D-erythritol 2-phosphate</name>
        <dbReference type="ChEBI" id="CHEBI:57919"/>
    </ligand>
</feature>
<feature type="binding site" evidence="1">
    <location>
        <position position="143"/>
    </location>
    <ligand>
        <name>4-CDP-2-C-methyl-D-erythritol 2-phosphate</name>
        <dbReference type="ChEBI" id="CHEBI:57919"/>
    </ligand>
</feature>
<feature type="binding site" evidence="1">
    <location>
        <position position="146"/>
    </location>
    <ligand>
        <name>4-CDP-2-C-methyl-D-erythritol 2-phosphate</name>
        <dbReference type="ChEBI" id="CHEBI:57919"/>
    </ligand>
</feature>
<feature type="site" description="Transition state stabilizer" evidence="1">
    <location>
        <position position="38"/>
    </location>
</feature>
<feature type="site" description="Transition state stabilizer" evidence="1">
    <location>
        <position position="137"/>
    </location>
</feature>
<dbReference type="EC" id="4.6.1.12" evidence="1"/>
<dbReference type="EMBL" id="CP000050">
    <property type="protein sequence ID" value="AAY49578.1"/>
    <property type="molecule type" value="Genomic_DNA"/>
</dbReference>
<dbReference type="RefSeq" id="WP_011036880.1">
    <property type="nucleotide sequence ID" value="NZ_CP155948.1"/>
</dbReference>
<dbReference type="SMR" id="Q4UTP5"/>
<dbReference type="KEGG" id="xcb:XC_2528"/>
<dbReference type="HOGENOM" id="CLU_084630_2_0_6"/>
<dbReference type="UniPathway" id="UPA00056">
    <property type="reaction ID" value="UER00095"/>
</dbReference>
<dbReference type="Proteomes" id="UP000000420">
    <property type="component" value="Chromosome"/>
</dbReference>
<dbReference type="GO" id="GO:0008685">
    <property type="term" value="F:2-C-methyl-D-erythritol 2,4-cyclodiphosphate synthase activity"/>
    <property type="evidence" value="ECO:0007669"/>
    <property type="project" value="UniProtKB-UniRule"/>
</dbReference>
<dbReference type="GO" id="GO:0046872">
    <property type="term" value="F:metal ion binding"/>
    <property type="evidence" value="ECO:0007669"/>
    <property type="project" value="UniProtKB-KW"/>
</dbReference>
<dbReference type="GO" id="GO:0019288">
    <property type="term" value="P:isopentenyl diphosphate biosynthetic process, methylerythritol 4-phosphate pathway"/>
    <property type="evidence" value="ECO:0007669"/>
    <property type="project" value="UniProtKB-UniRule"/>
</dbReference>
<dbReference type="GO" id="GO:0016114">
    <property type="term" value="P:terpenoid biosynthetic process"/>
    <property type="evidence" value="ECO:0007669"/>
    <property type="project" value="InterPro"/>
</dbReference>
<dbReference type="CDD" id="cd00554">
    <property type="entry name" value="MECDP_synthase"/>
    <property type="match status" value="1"/>
</dbReference>
<dbReference type="FunFam" id="3.30.1330.50:FF:000001">
    <property type="entry name" value="2-C-methyl-D-erythritol 2,4-cyclodiphosphate synthase"/>
    <property type="match status" value="1"/>
</dbReference>
<dbReference type="Gene3D" id="3.30.1330.50">
    <property type="entry name" value="2-C-methyl-D-erythritol 2,4-cyclodiphosphate synthase"/>
    <property type="match status" value="1"/>
</dbReference>
<dbReference type="HAMAP" id="MF_00107">
    <property type="entry name" value="IspF"/>
    <property type="match status" value="1"/>
</dbReference>
<dbReference type="InterPro" id="IPR003526">
    <property type="entry name" value="MECDP_synthase"/>
</dbReference>
<dbReference type="InterPro" id="IPR020555">
    <property type="entry name" value="MECDP_synthase_CS"/>
</dbReference>
<dbReference type="InterPro" id="IPR036571">
    <property type="entry name" value="MECDP_synthase_sf"/>
</dbReference>
<dbReference type="NCBIfam" id="TIGR00151">
    <property type="entry name" value="ispF"/>
    <property type="match status" value="1"/>
</dbReference>
<dbReference type="PANTHER" id="PTHR43181">
    <property type="entry name" value="2-C-METHYL-D-ERYTHRITOL 2,4-CYCLODIPHOSPHATE SYNTHASE, CHLOROPLASTIC"/>
    <property type="match status" value="1"/>
</dbReference>
<dbReference type="PANTHER" id="PTHR43181:SF1">
    <property type="entry name" value="2-C-METHYL-D-ERYTHRITOL 2,4-CYCLODIPHOSPHATE SYNTHASE, CHLOROPLASTIC"/>
    <property type="match status" value="1"/>
</dbReference>
<dbReference type="Pfam" id="PF02542">
    <property type="entry name" value="YgbB"/>
    <property type="match status" value="1"/>
</dbReference>
<dbReference type="SUPFAM" id="SSF69765">
    <property type="entry name" value="IpsF-like"/>
    <property type="match status" value="1"/>
</dbReference>
<dbReference type="PROSITE" id="PS01350">
    <property type="entry name" value="ISPF"/>
    <property type="match status" value="1"/>
</dbReference>
<evidence type="ECO:0000255" key="1">
    <source>
        <dbReference type="HAMAP-Rule" id="MF_00107"/>
    </source>
</evidence>
<name>ISPF_XANC8</name>
<protein>
    <recommendedName>
        <fullName evidence="1">2-C-methyl-D-erythritol 2,4-cyclodiphosphate synthase</fullName>
        <shortName evidence="1">MECDP-synthase</shortName>
        <shortName evidence="1">MECPP-synthase</shortName>
        <shortName evidence="1">MECPS</shortName>
        <ecNumber evidence="1">4.6.1.12</ecNumber>
    </recommendedName>
</protein>
<proteinExistence type="inferred from homology"/>
<accession>Q4UTP5</accession>
<sequence>MSFNFRIGQGYDVHAFGPGDHLMLGGVRMAHSHGVLAHSDGDVVLHALCDAMLGGLALGDIGVHFPPSDARWKGADSAQFVQHCDQLLRDRGWRVGNADITVICERPKVGPHALAMRERIAGLLAIELDAVSVKATTSEKLGFTGRSEGIAAQAAVLLGKIAA</sequence>
<organism>
    <name type="scientific">Xanthomonas campestris pv. campestris (strain 8004)</name>
    <dbReference type="NCBI Taxonomy" id="314565"/>
    <lineage>
        <taxon>Bacteria</taxon>
        <taxon>Pseudomonadati</taxon>
        <taxon>Pseudomonadota</taxon>
        <taxon>Gammaproteobacteria</taxon>
        <taxon>Lysobacterales</taxon>
        <taxon>Lysobacteraceae</taxon>
        <taxon>Xanthomonas</taxon>
    </lineage>
</organism>
<keyword id="KW-0414">Isoprene biosynthesis</keyword>
<keyword id="KW-0456">Lyase</keyword>
<keyword id="KW-0479">Metal-binding</keyword>
<reference key="1">
    <citation type="journal article" date="2005" name="Genome Res.">
        <title>Comparative and functional genomic analyses of the pathogenicity of phytopathogen Xanthomonas campestris pv. campestris.</title>
        <authorList>
            <person name="Qian W."/>
            <person name="Jia Y."/>
            <person name="Ren S.-X."/>
            <person name="He Y.-Q."/>
            <person name="Feng J.-X."/>
            <person name="Lu L.-F."/>
            <person name="Sun Q."/>
            <person name="Ying G."/>
            <person name="Tang D.-J."/>
            <person name="Tang H."/>
            <person name="Wu W."/>
            <person name="Hao P."/>
            <person name="Wang L."/>
            <person name="Jiang B.-L."/>
            <person name="Zeng S."/>
            <person name="Gu W.-Y."/>
            <person name="Lu G."/>
            <person name="Rong L."/>
            <person name="Tian Y."/>
            <person name="Yao Z."/>
            <person name="Fu G."/>
            <person name="Chen B."/>
            <person name="Fang R."/>
            <person name="Qiang B."/>
            <person name="Chen Z."/>
            <person name="Zhao G.-P."/>
            <person name="Tang J.-L."/>
            <person name="He C."/>
        </authorList>
    </citation>
    <scope>NUCLEOTIDE SEQUENCE [LARGE SCALE GENOMIC DNA]</scope>
    <source>
        <strain>8004</strain>
    </source>
</reference>
<gene>
    <name evidence="1" type="primary">ispF</name>
    <name type="ordered locus">XC_2528</name>
</gene>
<comment type="function">
    <text evidence="1">Involved in the biosynthesis of isopentenyl diphosphate (IPP) and dimethylallyl diphosphate (DMAPP), two major building blocks of isoprenoid compounds. Catalyzes the conversion of 4-diphosphocytidyl-2-C-methyl-D-erythritol 2-phosphate (CDP-ME2P) to 2-C-methyl-D-erythritol 2,4-cyclodiphosphate (ME-CPP) with a corresponding release of cytidine 5-monophosphate (CMP).</text>
</comment>
<comment type="catalytic activity">
    <reaction evidence="1">
        <text>4-CDP-2-C-methyl-D-erythritol 2-phosphate = 2-C-methyl-D-erythritol 2,4-cyclic diphosphate + CMP</text>
        <dbReference type="Rhea" id="RHEA:23864"/>
        <dbReference type="ChEBI" id="CHEBI:57919"/>
        <dbReference type="ChEBI" id="CHEBI:58483"/>
        <dbReference type="ChEBI" id="CHEBI:60377"/>
        <dbReference type="EC" id="4.6.1.12"/>
    </reaction>
</comment>
<comment type="cofactor">
    <cofactor evidence="1">
        <name>a divalent metal cation</name>
        <dbReference type="ChEBI" id="CHEBI:60240"/>
    </cofactor>
    <text evidence="1">Binds 1 divalent metal cation per subunit.</text>
</comment>
<comment type="pathway">
    <text evidence="1">Isoprenoid biosynthesis; isopentenyl diphosphate biosynthesis via DXP pathway; isopentenyl diphosphate from 1-deoxy-D-xylulose 5-phosphate: step 4/6.</text>
</comment>
<comment type="subunit">
    <text evidence="1">Homotrimer.</text>
</comment>
<comment type="similarity">
    <text evidence="1">Belongs to the IspF family.</text>
</comment>